<organism>
    <name type="scientific">Salmonella typhi</name>
    <dbReference type="NCBI Taxonomy" id="90370"/>
    <lineage>
        <taxon>Bacteria</taxon>
        <taxon>Pseudomonadati</taxon>
        <taxon>Pseudomonadota</taxon>
        <taxon>Gammaproteobacteria</taxon>
        <taxon>Enterobacterales</taxon>
        <taxon>Enterobacteriaceae</taxon>
        <taxon>Salmonella</taxon>
    </lineage>
</organism>
<keyword id="KW-0046">Antibiotic resistance</keyword>
<keyword id="KW-0067">ATP-binding</keyword>
<keyword id="KW-0997">Cell inner membrane</keyword>
<keyword id="KW-1003">Cell membrane</keyword>
<keyword id="KW-0472">Membrane</keyword>
<keyword id="KW-0547">Nucleotide-binding</keyword>
<keyword id="KW-1278">Translocase</keyword>
<keyword id="KW-0812">Transmembrane</keyword>
<keyword id="KW-1133">Transmembrane helix</keyword>
<keyword id="KW-0813">Transport</keyword>
<name>MACB_SALTI</name>
<proteinExistence type="inferred from homology"/>
<reference key="1">
    <citation type="journal article" date="2001" name="Nature">
        <title>Complete genome sequence of a multiple drug resistant Salmonella enterica serovar Typhi CT18.</title>
        <authorList>
            <person name="Parkhill J."/>
            <person name="Dougan G."/>
            <person name="James K.D."/>
            <person name="Thomson N.R."/>
            <person name="Pickard D."/>
            <person name="Wain J."/>
            <person name="Churcher C.M."/>
            <person name="Mungall K.L."/>
            <person name="Bentley S.D."/>
            <person name="Holden M.T.G."/>
            <person name="Sebaihia M."/>
            <person name="Baker S."/>
            <person name="Basham D."/>
            <person name="Brooks K."/>
            <person name="Chillingworth T."/>
            <person name="Connerton P."/>
            <person name="Cronin A."/>
            <person name="Davis P."/>
            <person name="Davies R.M."/>
            <person name="Dowd L."/>
            <person name="White N."/>
            <person name="Farrar J."/>
            <person name="Feltwell T."/>
            <person name="Hamlin N."/>
            <person name="Haque A."/>
            <person name="Hien T.T."/>
            <person name="Holroyd S."/>
            <person name="Jagels K."/>
            <person name="Krogh A."/>
            <person name="Larsen T.S."/>
            <person name="Leather S."/>
            <person name="Moule S."/>
            <person name="O'Gaora P."/>
            <person name="Parry C."/>
            <person name="Quail M.A."/>
            <person name="Rutherford K.M."/>
            <person name="Simmonds M."/>
            <person name="Skelton J."/>
            <person name="Stevens K."/>
            <person name="Whitehead S."/>
            <person name="Barrell B.G."/>
        </authorList>
    </citation>
    <scope>NUCLEOTIDE SEQUENCE [LARGE SCALE GENOMIC DNA]</scope>
    <source>
        <strain>CT18</strain>
    </source>
</reference>
<reference key="2">
    <citation type="journal article" date="2003" name="J. Bacteriol.">
        <title>Comparative genomics of Salmonella enterica serovar Typhi strains Ty2 and CT18.</title>
        <authorList>
            <person name="Deng W."/>
            <person name="Liou S.-R."/>
            <person name="Plunkett G. III"/>
            <person name="Mayhew G.F."/>
            <person name="Rose D.J."/>
            <person name="Burland V."/>
            <person name="Kodoyianni V."/>
            <person name="Schwartz D.C."/>
            <person name="Blattner F.R."/>
        </authorList>
    </citation>
    <scope>NUCLEOTIDE SEQUENCE [LARGE SCALE GENOMIC DNA]</scope>
    <source>
        <strain>ATCC 700931 / Ty2</strain>
    </source>
</reference>
<dbReference type="EC" id="7.6.2.-" evidence="1"/>
<dbReference type="EMBL" id="AL513382">
    <property type="protein sequence ID" value="CAD05344.1"/>
    <property type="molecule type" value="Genomic_DNA"/>
</dbReference>
<dbReference type="EMBL" id="AE014613">
    <property type="protein sequence ID" value="AAO69603.1"/>
    <property type="molecule type" value="Genomic_DNA"/>
</dbReference>
<dbReference type="RefSeq" id="NP_455432.1">
    <property type="nucleotide sequence ID" value="NC_003198.1"/>
</dbReference>
<dbReference type="RefSeq" id="WP_000125880.1">
    <property type="nucleotide sequence ID" value="NZ_WSUR01000019.1"/>
</dbReference>
<dbReference type="SMR" id="Q8Z824"/>
<dbReference type="STRING" id="220341.gene:17584934"/>
<dbReference type="KEGG" id="stt:t1991"/>
<dbReference type="KEGG" id="sty:STY0938"/>
<dbReference type="PATRIC" id="fig|220341.7.peg.947"/>
<dbReference type="eggNOG" id="COG0577">
    <property type="taxonomic scope" value="Bacteria"/>
</dbReference>
<dbReference type="eggNOG" id="COG1136">
    <property type="taxonomic scope" value="Bacteria"/>
</dbReference>
<dbReference type="HOGENOM" id="CLU_000604_78_2_6"/>
<dbReference type="OMA" id="RINFKVI"/>
<dbReference type="OrthoDB" id="9770036at2"/>
<dbReference type="Proteomes" id="UP000000541">
    <property type="component" value="Chromosome"/>
</dbReference>
<dbReference type="Proteomes" id="UP000002670">
    <property type="component" value="Chromosome"/>
</dbReference>
<dbReference type="GO" id="GO:0005886">
    <property type="term" value="C:plasma membrane"/>
    <property type="evidence" value="ECO:0007669"/>
    <property type="project" value="UniProtKB-SubCell"/>
</dbReference>
<dbReference type="GO" id="GO:0005524">
    <property type="term" value="F:ATP binding"/>
    <property type="evidence" value="ECO:0007669"/>
    <property type="project" value="UniProtKB-KW"/>
</dbReference>
<dbReference type="GO" id="GO:0016887">
    <property type="term" value="F:ATP hydrolysis activity"/>
    <property type="evidence" value="ECO:0007669"/>
    <property type="project" value="InterPro"/>
</dbReference>
<dbReference type="GO" id="GO:0022857">
    <property type="term" value="F:transmembrane transporter activity"/>
    <property type="evidence" value="ECO:0007669"/>
    <property type="project" value="TreeGrafter"/>
</dbReference>
<dbReference type="GO" id="GO:0046677">
    <property type="term" value="P:response to antibiotic"/>
    <property type="evidence" value="ECO:0007669"/>
    <property type="project" value="UniProtKB-KW"/>
</dbReference>
<dbReference type="CDD" id="cd03255">
    <property type="entry name" value="ABC_MJ0796_LolCDE_FtsE"/>
    <property type="match status" value="1"/>
</dbReference>
<dbReference type="FunFam" id="3.40.50.300:FF:000032">
    <property type="entry name" value="Export ABC transporter ATP-binding protein"/>
    <property type="match status" value="1"/>
</dbReference>
<dbReference type="Gene3D" id="3.40.50.300">
    <property type="entry name" value="P-loop containing nucleotide triphosphate hydrolases"/>
    <property type="match status" value="1"/>
</dbReference>
<dbReference type="InterPro" id="IPR003593">
    <property type="entry name" value="AAA+_ATPase"/>
</dbReference>
<dbReference type="InterPro" id="IPR003838">
    <property type="entry name" value="ABC3_permease_C"/>
</dbReference>
<dbReference type="InterPro" id="IPR003439">
    <property type="entry name" value="ABC_transporter-like_ATP-bd"/>
</dbReference>
<dbReference type="InterPro" id="IPR017871">
    <property type="entry name" value="ABC_transporter-like_CS"/>
</dbReference>
<dbReference type="InterPro" id="IPR017911">
    <property type="entry name" value="MacB-like_ATP-bd"/>
</dbReference>
<dbReference type="InterPro" id="IPR025857">
    <property type="entry name" value="MacB_PCD"/>
</dbReference>
<dbReference type="InterPro" id="IPR050250">
    <property type="entry name" value="Macrolide_Exporter_MacB"/>
</dbReference>
<dbReference type="InterPro" id="IPR027417">
    <property type="entry name" value="P-loop_NTPase"/>
</dbReference>
<dbReference type="NCBIfam" id="NF007826">
    <property type="entry name" value="PRK10535.1"/>
    <property type="match status" value="1"/>
</dbReference>
<dbReference type="PANTHER" id="PTHR30572:SF7">
    <property type="entry name" value="MACROLIDE EXPORT ATP-BINDING_PERMEASE PROTEIN MACB"/>
    <property type="match status" value="1"/>
</dbReference>
<dbReference type="PANTHER" id="PTHR30572">
    <property type="entry name" value="MEMBRANE COMPONENT OF TRANSPORTER-RELATED"/>
    <property type="match status" value="1"/>
</dbReference>
<dbReference type="Pfam" id="PF00005">
    <property type="entry name" value="ABC_tran"/>
    <property type="match status" value="1"/>
</dbReference>
<dbReference type="Pfam" id="PF02687">
    <property type="entry name" value="FtsX"/>
    <property type="match status" value="1"/>
</dbReference>
<dbReference type="Pfam" id="PF12704">
    <property type="entry name" value="MacB_PCD"/>
    <property type="match status" value="1"/>
</dbReference>
<dbReference type="SMART" id="SM00382">
    <property type="entry name" value="AAA"/>
    <property type="match status" value="1"/>
</dbReference>
<dbReference type="SUPFAM" id="SSF52540">
    <property type="entry name" value="P-loop containing nucleoside triphosphate hydrolases"/>
    <property type="match status" value="1"/>
</dbReference>
<dbReference type="PROSITE" id="PS00211">
    <property type="entry name" value="ABC_TRANSPORTER_1"/>
    <property type="match status" value="1"/>
</dbReference>
<dbReference type="PROSITE" id="PS50893">
    <property type="entry name" value="ABC_TRANSPORTER_2"/>
    <property type="match status" value="1"/>
</dbReference>
<dbReference type="PROSITE" id="PS51267">
    <property type="entry name" value="MACB"/>
    <property type="match status" value="1"/>
</dbReference>
<gene>
    <name evidence="1" type="primary">macB</name>
    <name type="ordered locus">STY0938</name>
    <name type="ordered locus">t1991</name>
</gene>
<accession>Q8Z824</accession>
<accession>Q7C8X1</accession>
<comment type="function">
    <text evidence="1">Part of the tripartite efflux system MacAB-TolC. MacB is a non-canonical ABC transporter that contains transmembrane domains (TMD), which form a pore in the inner membrane, and an ATP-binding domain (NBD), which is responsible for energy generation. Confers resistance against macrolides.</text>
</comment>
<comment type="subunit">
    <text evidence="1">Homodimer. Part of the tripartite efflux system MacAB-TolC, which is composed of an inner membrane transporter, MacB, a periplasmic membrane fusion protein, MacA, and an outer membrane component, TolC. The complex forms a large protein conduit and can translocate molecules across both the inner and outer membranes. Interacts with MacA.</text>
</comment>
<comment type="subcellular location">
    <subcellularLocation>
        <location evidence="1">Cell inner membrane</location>
        <topology evidence="1">Multi-pass membrane protein</topology>
    </subcellularLocation>
</comment>
<comment type="similarity">
    <text evidence="1">Belongs to the ABC transporter superfamily. Macrolide exporter (TC 3.A.1.122) family.</text>
</comment>
<protein>
    <recommendedName>
        <fullName evidence="1">Macrolide export ATP-binding/permease protein MacB</fullName>
        <ecNumber evidence="1">7.6.2.-</ecNumber>
    </recommendedName>
</protein>
<evidence type="ECO:0000255" key="1">
    <source>
        <dbReference type="HAMAP-Rule" id="MF_01720"/>
    </source>
</evidence>
<feature type="chain" id="PRO_0000269976" description="Macrolide export ATP-binding/permease protein MacB">
    <location>
        <begin position="1"/>
        <end position="648"/>
    </location>
</feature>
<feature type="transmembrane region" description="Helical" evidence="1">
    <location>
        <begin position="273"/>
        <end position="293"/>
    </location>
</feature>
<feature type="transmembrane region" description="Helical" evidence="1">
    <location>
        <begin position="417"/>
        <end position="437"/>
    </location>
</feature>
<feature type="transmembrane region" description="Helical" evidence="1">
    <location>
        <begin position="523"/>
        <end position="543"/>
    </location>
</feature>
<feature type="transmembrane region" description="Helical" evidence="1">
    <location>
        <begin position="577"/>
        <end position="597"/>
    </location>
</feature>
<feature type="transmembrane region" description="Helical" evidence="1">
    <location>
        <begin position="611"/>
        <end position="631"/>
    </location>
</feature>
<feature type="domain" description="ABC transporter" evidence="1">
    <location>
        <begin position="5"/>
        <end position="243"/>
    </location>
</feature>
<feature type="binding site" evidence="1">
    <location>
        <begin position="41"/>
        <end position="48"/>
    </location>
    <ligand>
        <name>ATP</name>
        <dbReference type="ChEBI" id="CHEBI:30616"/>
    </ligand>
</feature>
<sequence>MTALLELCNVSRSYPSGEEQVAVLKDISLQIHAGEMVAIVGVSGSGKSTLMNILGCLDKPTSGTYRVAGRDVSTLDPDALAQLRREHFGFIFQRYHLLSHLTAAQNVEIPAVYAGIERKKRQARARELLLRLGLSDRVDYPPSQLSGGQQQRVSIARALMNGGQVILADEPTGALDSHSGEEVMAILRQLRDRGHTVIIVTHDPLIAAQAERIIEIHDGKIVHNPPAQEKKREQGVDAAVVNTAPGWRQFASSFREALSMAWLAMAANKMRTLLTMLGIIIGIASVVSIVVVGDAAKQMVLADIRAMGTNTIDIHPGKDFGDDNPQYRQALKYDDLVAIQKQPWVNSATPSVSKSLRLRYGNIDIAVNANGVSGDYFNVYGMSFREGNTFNAVQQQDRAQVVVLDANTRRQLFPNKANVVGEVVLVGNMPVIVIGVAEEKPSMYGNSNLLQVWLPYSTMSDRIMGQSWLNSITVRVKDGVDSDQAEQQLTRLLTLRHGKKDFFTWNMDSVLKTAEKTTYTLQLFLTLVAVISLVVGGIGVMNIMLVSVTERTREIGIRMAVGARASDVLQQFLIEAVLVCLVGGALGISLSMFIAFMLQLFLPGWEIGFSLTALASAFLCSTFTGILFGWLPARNAARLDPVDALARE</sequence>